<evidence type="ECO:0000250" key="1"/>
<evidence type="ECO:0000255" key="2">
    <source>
        <dbReference type="HAMAP-Rule" id="MF_00492"/>
    </source>
</evidence>
<keyword id="KW-0963">Cytoplasm</keyword>
<keyword id="KW-0570">Pentose shunt</keyword>
<keyword id="KW-1185">Reference proteome</keyword>
<keyword id="KW-0704">Schiff base</keyword>
<keyword id="KW-0808">Transferase</keyword>
<sequence length="308" mass="33922">MTSKLEQLKQFTTVVADTGDIDAIARLKPVDATTNPSLLLKAAAMPRYAEHLGNAMKQCQGDIGLACDLFAVAVGKQILELIPGRISTEVDARLSFDTQAMVQRGERLIGLYEQAGISRERVLIKIASTWEGIRAAEQLEKAGIQTNLTLLFSFTQAVACAEAGVFLISPFVGRIYDWYKKHEGRDYQGAEDPGVQSVSRIYDYYKTHGYKTVVMGASFRNVGQIESLAGCDRLTISPELLGQLAEASGTLERKLEPGRASEPRISLDEKSFRWGLNEDAMATEKLAEGIRQFARDQEKLEALLTELA</sequence>
<name>TAL_STUS1</name>
<feature type="chain" id="PRO_1000014515" description="Transaldolase">
    <location>
        <begin position="1"/>
        <end position="308"/>
    </location>
</feature>
<feature type="active site" description="Schiff-base intermediate with substrate" evidence="2">
    <location>
        <position position="125"/>
    </location>
</feature>
<gene>
    <name evidence="2" type="primary">tal</name>
    <name type="ordered locus">PST_1660</name>
</gene>
<protein>
    <recommendedName>
        <fullName evidence="2">Transaldolase</fullName>
        <ecNumber evidence="2">2.2.1.2</ecNumber>
    </recommendedName>
</protein>
<dbReference type="EC" id="2.2.1.2" evidence="2"/>
<dbReference type="EMBL" id="CP000304">
    <property type="protein sequence ID" value="ABP79344.1"/>
    <property type="molecule type" value="Genomic_DNA"/>
</dbReference>
<dbReference type="RefSeq" id="WP_011912821.1">
    <property type="nucleotide sequence ID" value="NC_009434.1"/>
</dbReference>
<dbReference type="SMR" id="A4VK43"/>
<dbReference type="KEGG" id="psa:PST_1660"/>
<dbReference type="eggNOG" id="COG0176">
    <property type="taxonomic scope" value="Bacteria"/>
</dbReference>
<dbReference type="HOGENOM" id="CLU_047470_0_1_6"/>
<dbReference type="UniPathway" id="UPA00115">
    <property type="reaction ID" value="UER00414"/>
</dbReference>
<dbReference type="Proteomes" id="UP000000233">
    <property type="component" value="Chromosome"/>
</dbReference>
<dbReference type="GO" id="GO:0005829">
    <property type="term" value="C:cytosol"/>
    <property type="evidence" value="ECO:0007669"/>
    <property type="project" value="TreeGrafter"/>
</dbReference>
<dbReference type="GO" id="GO:0004801">
    <property type="term" value="F:transaldolase activity"/>
    <property type="evidence" value="ECO:0000250"/>
    <property type="project" value="UniProtKB"/>
</dbReference>
<dbReference type="GO" id="GO:0005975">
    <property type="term" value="P:carbohydrate metabolic process"/>
    <property type="evidence" value="ECO:0007669"/>
    <property type="project" value="InterPro"/>
</dbReference>
<dbReference type="GO" id="GO:0006098">
    <property type="term" value="P:pentose-phosphate shunt"/>
    <property type="evidence" value="ECO:0007669"/>
    <property type="project" value="UniProtKB-UniRule"/>
</dbReference>
<dbReference type="CDD" id="cd00957">
    <property type="entry name" value="Transaldolase_TalAB"/>
    <property type="match status" value="1"/>
</dbReference>
<dbReference type="FunFam" id="3.20.20.70:FF:000002">
    <property type="entry name" value="Transaldolase"/>
    <property type="match status" value="1"/>
</dbReference>
<dbReference type="Gene3D" id="3.20.20.70">
    <property type="entry name" value="Aldolase class I"/>
    <property type="match status" value="1"/>
</dbReference>
<dbReference type="HAMAP" id="MF_00492">
    <property type="entry name" value="Transaldolase_1"/>
    <property type="match status" value="1"/>
</dbReference>
<dbReference type="InterPro" id="IPR013785">
    <property type="entry name" value="Aldolase_TIM"/>
</dbReference>
<dbReference type="InterPro" id="IPR001585">
    <property type="entry name" value="TAL/FSA"/>
</dbReference>
<dbReference type="InterPro" id="IPR004730">
    <property type="entry name" value="Transaldolase_1"/>
</dbReference>
<dbReference type="InterPro" id="IPR018225">
    <property type="entry name" value="Transaldolase_AS"/>
</dbReference>
<dbReference type="NCBIfam" id="NF009001">
    <property type="entry name" value="PRK12346.1"/>
    <property type="match status" value="1"/>
</dbReference>
<dbReference type="NCBIfam" id="TIGR00874">
    <property type="entry name" value="talAB"/>
    <property type="match status" value="1"/>
</dbReference>
<dbReference type="PANTHER" id="PTHR10683">
    <property type="entry name" value="TRANSALDOLASE"/>
    <property type="match status" value="1"/>
</dbReference>
<dbReference type="PANTHER" id="PTHR10683:SF18">
    <property type="entry name" value="TRANSALDOLASE"/>
    <property type="match status" value="1"/>
</dbReference>
<dbReference type="Pfam" id="PF00923">
    <property type="entry name" value="TAL_FSA"/>
    <property type="match status" value="1"/>
</dbReference>
<dbReference type="SUPFAM" id="SSF51569">
    <property type="entry name" value="Aldolase"/>
    <property type="match status" value="1"/>
</dbReference>
<dbReference type="PROSITE" id="PS01054">
    <property type="entry name" value="TRANSALDOLASE_1"/>
    <property type="match status" value="1"/>
</dbReference>
<dbReference type="PROSITE" id="PS00958">
    <property type="entry name" value="TRANSALDOLASE_2"/>
    <property type="match status" value="1"/>
</dbReference>
<accession>A4VK43</accession>
<reference key="1">
    <citation type="journal article" date="2008" name="Proc. Natl. Acad. Sci. U.S.A.">
        <title>Nitrogen fixation island and rhizosphere competence traits in the genome of root-associated Pseudomonas stutzeri A1501.</title>
        <authorList>
            <person name="Yan Y."/>
            <person name="Yang J."/>
            <person name="Dou Y."/>
            <person name="Chen M."/>
            <person name="Ping S."/>
            <person name="Peng J."/>
            <person name="Lu W."/>
            <person name="Zhang W."/>
            <person name="Yao Z."/>
            <person name="Li H."/>
            <person name="Liu W."/>
            <person name="He S."/>
            <person name="Geng L."/>
            <person name="Zhang X."/>
            <person name="Yang F."/>
            <person name="Yu H."/>
            <person name="Zhan Y."/>
            <person name="Li D."/>
            <person name="Lin Z."/>
            <person name="Wang Y."/>
            <person name="Elmerich C."/>
            <person name="Lin M."/>
            <person name="Jin Q."/>
        </authorList>
    </citation>
    <scope>NUCLEOTIDE SEQUENCE [LARGE SCALE GENOMIC DNA]</scope>
    <source>
        <strain>A1501</strain>
    </source>
</reference>
<proteinExistence type="inferred from homology"/>
<organism>
    <name type="scientific">Stutzerimonas stutzeri (strain A1501)</name>
    <name type="common">Pseudomonas stutzeri</name>
    <dbReference type="NCBI Taxonomy" id="379731"/>
    <lineage>
        <taxon>Bacteria</taxon>
        <taxon>Pseudomonadati</taxon>
        <taxon>Pseudomonadota</taxon>
        <taxon>Gammaproteobacteria</taxon>
        <taxon>Pseudomonadales</taxon>
        <taxon>Pseudomonadaceae</taxon>
        <taxon>Stutzerimonas</taxon>
    </lineage>
</organism>
<comment type="function">
    <text evidence="2">Transaldolase is important for the balance of metabolites in the pentose-phosphate pathway.</text>
</comment>
<comment type="catalytic activity">
    <reaction evidence="2">
        <text>D-sedoheptulose 7-phosphate + D-glyceraldehyde 3-phosphate = D-erythrose 4-phosphate + beta-D-fructose 6-phosphate</text>
        <dbReference type="Rhea" id="RHEA:17053"/>
        <dbReference type="ChEBI" id="CHEBI:16897"/>
        <dbReference type="ChEBI" id="CHEBI:57483"/>
        <dbReference type="ChEBI" id="CHEBI:57634"/>
        <dbReference type="ChEBI" id="CHEBI:59776"/>
        <dbReference type="EC" id="2.2.1.2"/>
    </reaction>
</comment>
<comment type="pathway">
    <text evidence="2">Carbohydrate degradation; pentose phosphate pathway; D-glyceraldehyde 3-phosphate and beta-D-fructose 6-phosphate from D-ribose 5-phosphate and D-xylulose 5-phosphate (non-oxidative stage): step 2/3.</text>
</comment>
<comment type="subunit">
    <text evidence="1">Homodimer.</text>
</comment>
<comment type="subcellular location">
    <subcellularLocation>
        <location evidence="2">Cytoplasm</location>
    </subcellularLocation>
</comment>
<comment type="similarity">
    <text evidence="2">Belongs to the transaldolase family. Type 1 subfamily.</text>
</comment>